<dbReference type="EC" id="7.2.2.7" evidence="1"/>
<dbReference type="EMBL" id="Z47200">
    <property type="protein sequence ID" value="CAA87396.1"/>
    <property type="molecule type" value="Genomic_DNA"/>
</dbReference>
<dbReference type="PIR" id="T43920">
    <property type="entry name" value="T43920"/>
</dbReference>
<dbReference type="SMR" id="Q56927"/>
<dbReference type="STRING" id="1443113.LC20_03824"/>
<dbReference type="GO" id="GO:0005886">
    <property type="term" value="C:plasma membrane"/>
    <property type="evidence" value="ECO:0007669"/>
    <property type="project" value="UniProtKB-SubCell"/>
</dbReference>
<dbReference type="GO" id="GO:0015408">
    <property type="term" value="F:ABC-type ferric iron transporter activity"/>
    <property type="evidence" value="ECO:0007669"/>
    <property type="project" value="UniProtKB-EC"/>
</dbReference>
<dbReference type="GO" id="GO:0005524">
    <property type="term" value="F:ATP binding"/>
    <property type="evidence" value="ECO:0007669"/>
    <property type="project" value="UniProtKB-KW"/>
</dbReference>
<dbReference type="GO" id="GO:0016887">
    <property type="term" value="F:ATP hydrolysis activity"/>
    <property type="evidence" value="ECO:0007669"/>
    <property type="project" value="InterPro"/>
</dbReference>
<dbReference type="CDD" id="cd03259">
    <property type="entry name" value="ABC_Carb_Solutes_like"/>
    <property type="match status" value="1"/>
</dbReference>
<dbReference type="FunFam" id="3.40.50.300:FF:000425">
    <property type="entry name" value="Probable ABC transporter, ATP-binding subunit"/>
    <property type="match status" value="1"/>
</dbReference>
<dbReference type="Gene3D" id="2.40.50.450">
    <property type="match status" value="1"/>
</dbReference>
<dbReference type="Gene3D" id="3.40.50.300">
    <property type="entry name" value="P-loop containing nucleotide triphosphate hydrolases"/>
    <property type="match status" value="1"/>
</dbReference>
<dbReference type="InterPro" id="IPR003593">
    <property type="entry name" value="AAA+_ATPase"/>
</dbReference>
<dbReference type="InterPro" id="IPR050093">
    <property type="entry name" value="ABC_SmlMolc_Importer"/>
</dbReference>
<dbReference type="InterPro" id="IPR003439">
    <property type="entry name" value="ABC_transporter-like_ATP-bd"/>
</dbReference>
<dbReference type="InterPro" id="IPR017871">
    <property type="entry name" value="ABC_transporter-like_CS"/>
</dbReference>
<dbReference type="InterPro" id="IPR015853">
    <property type="entry name" value="ABC_transpr_FbpC"/>
</dbReference>
<dbReference type="InterPro" id="IPR027417">
    <property type="entry name" value="P-loop_NTPase"/>
</dbReference>
<dbReference type="PANTHER" id="PTHR42781">
    <property type="entry name" value="SPERMIDINE/PUTRESCINE IMPORT ATP-BINDING PROTEIN POTA"/>
    <property type="match status" value="1"/>
</dbReference>
<dbReference type="PANTHER" id="PTHR42781:SF4">
    <property type="entry name" value="SPERMIDINE_PUTRESCINE IMPORT ATP-BINDING PROTEIN POTA"/>
    <property type="match status" value="1"/>
</dbReference>
<dbReference type="Pfam" id="PF00005">
    <property type="entry name" value="ABC_tran"/>
    <property type="match status" value="1"/>
</dbReference>
<dbReference type="SMART" id="SM00382">
    <property type="entry name" value="AAA"/>
    <property type="match status" value="1"/>
</dbReference>
<dbReference type="SUPFAM" id="SSF52540">
    <property type="entry name" value="P-loop containing nucleoside triphosphate hydrolases"/>
    <property type="match status" value="1"/>
</dbReference>
<dbReference type="PROSITE" id="PS00211">
    <property type="entry name" value="ABC_TRANSPORTER_1"/>
    <property type="match status" value="1"/>
</dbReference>
<dbReference type="PROSITE" id="PS50893">
    <property type="entry name" value="ABC_TRANSPORTER_2"/>
    <property type="match status" value="1"/>
</dbReference>
<dbReference type="PROSITE" id="PS51242">
    <property type="entry name" value="FBPC"/>
    <property type="match status" value="1"/>
</dbReference>
<proteinExistence type="inferred from homology"/>
<accession>Q56927</accession>
<comment type="function">
    <text evidence="1">Part of the ABC transporter complex FbpABC involved in Fe(3+) ions import. Responsible for energy coupling to the transport system.</text>
</comment>
<comment type="catalytic activity">
    <reaction evidence="1">
        <text>Fe(3+)(out) + ATP + H2O = Fe(3+)(in) + ADP + phosphate + H(+)</text>
        <dbReference type="Rhea" id="RHEA:12332"/>
        <dbReference type="ChEBI" id="CHEBI:15377"/>
        <dbReference type="ChEBI" id="CHEBI:15378"/>
        <dbReference type="ChEBI" id="CHEBI:29034"/>
        <dbReference type="ChEBI" id="CHEBI:30616"/>
        <dbReference type="ChEBI" id="CHEBI:43474"/>
        <dbReference type="ChEBI" id="CHEBI:456216"/>
        <dbReference type="EC" id="7.2.2.7"/>
    </reaction>
</comment>
<comment type="subunit">
    <text evidence="1">The complex is composed of two ATP-binding proteins (FbpC), two transmembrane proteins (FbpB) and a solute-binding protein (FbpA).</text>
</comment>
<comment type="subcellular location">
    <subcellularLocation>
        <location evidence="1">Cell inner membrane</location>
        <topology evidence="1">Peripheral membrane protein</topology>
    </subcellularLocation>
</comment>
<comment type="similarity">
    <text evidence="1">Belongs to the ABC transporter superfamily. Fe(3+) ion importer (TC 3.A.1.10) family.</text>
</comment>
<gene>
    <name evidence="1" type="primary">fbpC</name>
</gene>
<organism>
    <name type="scientific">Yersinia enterocolitica</name>
    <dbReference type="NCBI Taxonomy" id="630"/>
    <lineage>
        <taxon>Bacteria</taxon>
        <taxon>Pseudomonadati</taxon>
        <taxon>Pseudomonadota</taxon>
        <taxon>Gammaproteobacteria</taxon>
        <taxon>Enterobacterales</taxon>
        <taxon>Yersiniaceae</taxon>
        <taxon>Yersinia</taxon>
    </lineage>
</organism>
<evidence type="ECO:0000255" key="1">
    <source>
        <dbReference type="HAMAP-Rule" id="MF_01706"/>
    </source>
</evidence>
<keyword id="KW-0067">ATP-binding</keyword>
<keyword id="KW-0997">Cell inner membrane</keyword>
<keyword id="KW-1003">Cell membrane</keyword>
<keyword id="KW-0406">Ion transport</keyword>
<keyword id="KW-0408">Iron</keyword>
<keyword id="KW-0410">Iron transport</keyword>
<keyword id="KW-0472">Membrane</keyword>
<keyword id="KW-0547">Nucleotide-binding</keyword>
<keyword id="KW-1278">Translocase</keyword>
<keyword id="KW-0813">Transport</keyword>
<protein>
    <recommendedName>
        <fullName evidence="1">Fe(3+) ions import ATP-binding protein FbpC</fullName>
        <ecNumber evidence="1">7.2.2.7</ecNumber>
    </recommendedName>
</protein>
<reference key="1">
    <citation type="submission" date="1999-11" db="EMBL/GenBank/DDBJ databases">
        <title>Molecular characterization of a novel siderophore-independent iron transport system common in Yersinia.</title>
        <authorList>
            <person name="Saken E.M."/>
            <person name="Rakin A.V."/>
            <person name="Heesemann J."/>
        </authorList>
    </citation>
    <scope>NUCLEOTIDE SEQUENCE [GENOMIC DNA]</scope>
    <source>
        <strain>ATCC 51871 / WA-314 / Serotype O:8</strain>
    </source>
</reference>
<name>FBPC_YEREN</name>
<sequence>MSTLDFNKIGKSYQSVRVLEGIDLQVTAGSRTAIVGPSGSGKTTLLRIIAGFETPDSGKVILQGNPLFDQSTHVPAHKRGIGFVPQDGALFPHFTAAGNIAYGLKGSKQDKARRIDKLMEMVALDRRLAQLWPHEISGGQQQRVALARALGQRPALMLLVEPFSTLDTALRASTRKAVAELLSQANIASILVTHDQSEALSFADQVAVMRAGKLVHVGAPQELYLRPIDEPTATFLGETLILSPNIEPGWPDCALGRVKVDDATRQGQTRIMLRPEQVTITPLPSAHHYPTHCLAKIVSIDFAGFISTLTLSIIEHNEIVAIKTISREGIHVGLMVDLTIMGQAHIFVE</sequence>
<feature type="chain" id="PRO_0000092368" description="Fe(3+) ions import ATP-binding protein FbpC">
    <location>
        <begin position="1"/>
        <end position="349"/>
    </location>
</feature>
<feature type="domain" description="ABC transporter" evidence="1">
    <location>
        <begin position="4"/>
        <end position="236"/>
    </location>
</feature>
<feature type="binding site" evidence="1">
    <location>
        <begin position="36"/>
        <end position="43"/>
    </location>
    <ligand>
        <name>ATP</name>
        <dbReference type="ChEBI" id="CHEBI:30616"/>
    </ligand>
</feature>